<reference key="1">
    <citation type="submission" date="2006-11" db="EMBL/GenBank/DDBJ databases">
        <title>Identification and characterization of a new conjugation/ type IVA secretion system (trb/tra) of L. pneumophila Corby localized on a mobile genomic island.</title>
        <authorList>
            <person name="Gloeckner G."/>
            <person name="Albert-Weissenberger C."/>
            <person name="Weinmann E."/>
            <person name="Jacobi S."/>
            <person name="Schunder E."/>
            <person name="Steinert M."/>
            <person name="Buchrieser C."/>
            <person name="Hacker J."/>
            <person name="Heuner K."/>
        </authorList>
    </citation>
    <scope>NUCLEOTIDE SEQUENCE [LARGE SCALE GENOMIC DNA]</scope>
    <source>
        <strain>Corby</strain>
    </source>
</reference>
<dbReference type="EC" id="2.5.1.6" evidence="1"/>
<dbReference type="EMBL" id="CP000675">
    <property type="protein sequence ID" value="ABQ55455.1"/>
    <property type="molecule type" value="Genomic_DNA"/>
</dbReference>
<dbReference type="RefSeq" id="WP_011214269.1">
    <property type="nucleotide sequence ID" value="NZ_JAPMSS010000011.1"/>
</dbReference>
<dbReference type="SMR" id="A5IDK5"/>
<dbReference type="KEGG" id="lpc:LPC_1506"/>
<dbReference type="HOGENOM" id="CLU_041802_1_1_6"/>
<dbReference type="UniPathway" id="UPA00315">
    <property type="reaction ID" value="UER00080"/>
</dbReference>
<dbReference type="GO" id="GO:0005737">
    <property type="term" value="C:cytoplasm"/>
    <property type="evidence" value="ECO:0007669"/>
    <property type="project" value="UniProtKB-SubCell"/>
</dbReference>
<dbReference type="GO" id="GO:0005524">
    <property type="term" value="F:ATP binding"/>
    <property type="evidence" value="ECO:0007669"/>
    <property type="project" value="UniProtKB-UniRule"/>
</dbReference>
<dbReference type="GO" id="GO:0000287">
    <property type="term" value="F:magnesium ion binding"/>
    <property type="evidence" value="ECO:0007669"/>
    <property type="project" value="UniProtKB-UniRule"/>
</dbReference>
<dbReference type="GO" id="GO:0004478">
    <property type="term" value="F:methionine adenosyltransferase activity"/>
    <property type="evidence" value="ECO:0007669"/>
    <property type="project" value="UniProtKB-UniRule"/>
</dbReference>
<dbReference type="GO" id="GO:0006730">
    <property type="term" value="P:one-carbon metabolic process"/>
    <property type="evidence" value="ECO:0007669"/>
    <property type="project" value="UniProtKB-KW"/>
</dbReference>
<dbReference type="GO" id="GO:0006556">
    <property type="term" value="P:S-adenosylmethionine biosynthetic process"/>
    <property type="evidence" value="ECO:0007669"/>
    <property type="project" value="UniProtKB-UniRule"/>
</dbReference>
<dbReference type="CDD" id="cd18079">
    <property type="entry name" value="S-AdoMet_synt"/>
    <property type="match status" value="1"/>
</dbReference>
<dbReference type="FunFam" id="3.30.300.10:FF:000001">
    <property type="entry name" value="S-adenosylmethionine synthase"/>
    <property type="match status" value="1"/>
</dbReference>
<dbReference type="FunFam" id="3.30.300.10:FF:000003">
    <property type="entry name" value="S-adenosylmethionine synthase"/>
    <property type="match status" value="1"/>
</dbReference>
<dbReference type="Gene3D" id="3.30.300.10">
    <property type="match status" value="3"/>
</dbReference>
<dbReference type="HAMAP" id="MF_00086">
    <property type="entry name" value="S_AdoMet_synth1"/>
    <property type="match status" value="1"/>
</dbReference>
<dbReference type="InterPro" id="IPR022631">
    <property type="entry name" value="ADOMET_SYNTHASE_CS"/>
</dbReference>
<dbReference type="InterPro" id="IPR022630">
    <property type="entry name" value="S-AdoMet_synt_C"/>
</dbReference>
<dbReference type="InterPro" id="IPR022629">
    <property type="entry name" value="S-AdoMet_synt_central"/>
</dbReference>
<dbReference type="InterPro" id="IPR022628">
    <property type="entry name" value="S-AdoMet_synt_N"/>
</dbReference>
<dbReference type="InterPro" id="IPR002133">
    <property type="entry name" value="S-AdoMet_synthetase"/>
</dbReference>
<dbReference type="InterPro" id="IPR022636">
    <property type="entry name" value="S-AdoMet_synthetase_sfam"/>
</dbReference>
<dbReference type="NCBIfam" id="TIGR01034">
    <property type="entry name" value="metK"/>
    <property type="match status" value="1"/>
</dbReference>
<dbReference type="PANTHER" id="PTHR11964">
    <property type="entry name" value="S-ADENOSYLMETHIONINE SYNTHETASE"/>
    <property type="match status" value="1"/>
</dbReference>
<dbReference type="Pfam" id="PF02773">
    <property type="entry name" value="S-AdoMet_synt_C"/>
    <property type="match status" value="1"/>
</dbReference>
<dbReference type="Pfam" id="PF02772">
    <property type="entry name" value="S-AdoMet_synt_M"/>
    <property type="match status" value="1"/>
</dbReference>
<dbReference type="Pfam" id="PF00438">
    <property type="entry name" value="S-AdoMet_synt_N"/>
    <property type="match status" value="1"/>
</dbReference>
<dbReference type="PIRSF" id="PIRSF000497">
    <property type="entry name" value="MAT"/>
    <property type="match status" value="1"/>
</dbReference>
<dbReference type="SUPFAM" id="SSF55973">
    <property type="entry name" value="S-adenosylmethionine synthetase"/>
    <property type="match status" value="3"/>
</dbReference>
<dbReference type="PROSITE" id="PS00376">
    <property type="entry name" value="ADOMET_SYNTHASE_1"/>
    <property type="match status" value="1"/>
</dbReference>
<dbReference type="PROSITE" id="PS00377">
    <property type="entry name" value="ADOMET_SYNTHASE_2"/>
    <property type="match status" value="1"/>
</dbReference>
<protein>
    <recommendedName>
        <fullName evidence="1">S-adenosylmethionine synthase</fullName>
        <shortName evidence="1">AdoMet synthase</shortName>
        <ecNumber evidence="1">2.5.1.6</ecNumber>
    </recommendedName>
    <alternativeName>
        <fullName evidence="1">MAT</fullName>
    </alternativeName>
    <alternativeName>
        <fullName evidence="1">Methionine adenosyltransferase</fullName>
    </alternativeName>
</protein>
<keyword id="KW-0067">ATP-binding</keyword>
<keyword id="KW-0963">Cytoplasm</keyword>
<keyword id="KW-0460">Magnesium</keyword>
<keyword id="KW-0479">Metal-binding</keyword>
<keyword id="KW-0547">Nucleotide-binding</keyword>
<keyword id="KW-0554">One-carbon metabolism</keyword>
<keyword id="KW-0630">Potassium</keyword>
<keyword id="KW-0808">Transferase</keyword>
<gene>
    <name evidence="1" type="primary">metK</name>
    <name type="ordered locus">LPC_1506</name>
</gene>
<accession>A5IDK5</accession>
<comment type="function">
    <text evidence="1">Catalyzes the formation of S-adenosylmethionine (AdoMet) from methionine and ATP. The overall synthetic reaction is composed of two sequential steps, AdoMet formation and the subsequent tripolyphosphate hydrolysis which occurs prior to release of AdoMet from the enzyme.</text>
</comment>
<comment type="catalytic activity">
    <reaction evidence="1">
        <text>L-methionine + ATP + H2O = S-adenosyl-L-methionine + phosphate + diphosphate</text>
        <dbReference type="Rhea" id="RHEA:21080"/>
        <dbReference type="ChEBI" id="CHEBI:15377"/>
        <dbReference type="ChEBI" id="CHEBI:30616"/>
        <dbReference type="ChEBI" id="CHEBI:33019"/>
        <dbReference type="ChEBI" id="CHEBI:43474"/>
        <dbReference type="ChEBI" id="CHEBI:57844"/>
        <dbReference type="ChEBI" id="CHEBI:59789"/>
        <dbReference type="EC" id="2.5.1.6"/>
    </reaction>
</comment>
<comment type="cofactor">
    <cofactor evidence="1">
        <name>Mg(2+)</name>
        <dbReference type="ChEBI" id="CHEBI:18420"/>
    </cofactor>
    <text evidence="1">Binds 2 divalent ions per subunit.</text>
</comment>
<comment type="cofactor">
    <cofactor evidence="1">
        <name>K(+)</name>
        <dbReference type="ChEBI" id="CHEBI:29103"/>
    </cofactor>
    <text evidence="1">Binds 1 potassium ion per subunit.</text>
</comment>
<comment type="pathway">
    <text evidence="1">Amino-acid biosynthesis; S-adenosyl-L-methionine biosynthesis; S-adenosyl-L-methionine from L-methionine: step 1/1.</text>
</comment>
<comment type="subunit">
    <text evidence="1">Homotetramer; dimer of dimers.</text>
</comment>
<comment type="subcellular location">
    <subcellularLocation>
        <location evidence="1">Cytoplasm</location>
    </subcellularLocation>
</comment>
<comment type="similarity">
    <text evidence="1">Belongs to the AdoMet synthase family.</text>
</comment>
<feature type="chain" id="PRO_1000007945" description="S-adenosylmethionine synthase">
    <location>
        <begin position="1"/>
        <end position="382"/>
    </location>
</feature>
<feature type="region of interest" description="Flexible loop" evidence="1">
    <location>
        <begin position="100"/>
        <end position="110"/>
    </location>
</feature>
<feature type="binding site" description="in other chain" evidence="1">
    <location>
        <position position="16"/>
    </location>
    <ligand>
        <name>ATP</name>
        <dbReference type="ChEBI" id="CHEBI:30616"/>
        <note>ligand shared between two neighboring subunits</note>
    </ligand>
</feature>
<feature type="binding site" evidence="1">
    <location>
        <position position="18"/>
    </location>
    <ligand>
        <name>Mg(2+)</name>
        <dbReference type="ChEBI" id="CHEBI:18420"/>
    </ligand>
</feature>
<feature type="binding site" evidence="1">
    <location>
        <position position="44"/>
    </location>
    <ligand>
        <name>K(+)</name>
        <dbReference type="ChEBI" id="CHEBI:29103"/>
    </ligand>
</feature>
<feature type="binding site" description="in other chain" evidence="1">
    <location>
        <position position="57"/>
    </location>
    <ligand>
        <name>L-methionine</name>
        <dbReference type="ChEBI" id="CHEBI:57844"/>
        <note>ligand shared between two neighboring subunits</note>
    </ligand>
</feature>
<feature type="binding site" description="in other chain" evidence="1">
    <location>
        <position position="100"/>
    </location>
    <ligand>
        <name>L-methionine</name>
        <dbReference type="ChEBI" id="CHEBI:57844"/>
        <note>ligand shared between two neighboring subunits</note>
    </ligand>
</feature>
<feature type="binding site" description="in other chain" evidence="1">
    <location>
        <begin position="165"/>
        <end position="167"/>
    </location>
    <ligand>
        <name>ATP</name>
        <dbReference type="ChEBI" id="CHEBI:30616"/>
        <note>ligand shared between two neighboring subunits</note>
    </ligand>
</feature>
<feature type="binding site" description="in other chain" evidence="1">
    <location>
        <begin position="231"/>
        <end position="232"/>
    </location>
    <ligand>
        <name>ATP</name>
        <dbReference type="ChEBI" id="CHEBI:30616"/>
        <note>ligand shared between two neighboring subunits</note>
    </ligand>
</feature>
<feature type="binding site" evidence="1">
    <location>
        <position position="240"/>
    </location>
    <ligand>
        <name>ATP</name>
        <dbReference type="ChEBI" id="CHEBI:30616"/>
        <note>ligand shared between two neighboring subunits</note>
    </ligand>
</feature>
<feature type="binding site" evidence="1">
    <location>
        <position position="240"/>
    </location>
    <ligand>
        <name>L-methionine</name>
        <dbReference type="ChEBI" id="CHEBI:57844"/>
        <note>ligand shared between two neighboring subunits</note>
    </ligand>
</feature>
<feature type="binding site" description="in other chain" evidence="1">
    <location>
        <begin position="246"/>
        <end position="247"/>
    </location>
    <ligand>
        <name>ATP</name>
        <dbReference type="ChEBI" id="CHEBI:30616"/>
        <note>ligand shared between two neighboring subunits</note>
    </ligand>
</feature>
<feature type="binding site" evidence="1">
    <location>
        <position position="267"/>
    </location>
    <ligand>
        <name>ATP</name>
        <dbReference type="ChEBI" id="CHEBI:30616"/>
        <note>ligand shared between two neighboring subunits</note>
    </ligand>
</feature>
<feature type="binding site" description="in other chain" evidence="1">
    <location>
        <position position="271"/>
    </location>
    <ligand>
        <name>L-methionine</name>
        <dbReference type="ChEBI" id="CHEBI:57844"/>
        <note>ligand shared between two neighboring subunits</note>
    </ligand>
</feature>
<sequence length="382" mass="42006">MNEVYVFTSESVSEGHPDKIADQISDAILDAILAQDPKARVACEVLVKTGMVLVGGEITTKAWVDVEEITRHVIKDIGYNSSQMGFDWESCAVLSAIGKQSPDIAQGVDNQQTKILGAGDQGLMFGYASRETDVFMPAPIAYAHRLMEKLAKARKSGQLPWLRPDAKCQLTLKYEQGMPVEVDTVVFSTQHSPDIEHKDLVEAIREEIIKSVLPAEWLNDKTRYFINPTGRFVIGGPLGDCGLTGRKIIVDTYGGMARHGGGCFSGKDPSKVDRSAAYAARHVAKNIVAAGLADKCELQISYAIGVAEPTSIFVDTFGTGRLKNSEIIDLIHTHFDLTPQGIIDQHDLLRPIYRQTATYGHYGRENFPWERLDKVAELSKAL</sequence>
<name>METK_LEGPC</name>
<proteinExistence type="inferred from homology"/>
<organism>
    <name type="scientific">Legionella pneumophila (strain Corby)</name>
    <dbReference type="NCBI Taxonomy" id="400673"/>
    <lineage>
        <taxon>Bacteria</taxon>
        <taxon>Pseudomonadati</taxon>
        <taxon>Pseudomonadota</taxon>
        <taxon>Gammaproteobacteria</taxon>
        <taxon>Legionellales</taxon>
        <taxon>Legionellaceae</taxon>
        <taxon>Legionella</taxon>
    </lineage>
</organism>
<evidence type="ECO:0000255" key="1">
    <source>
        <dbReference type="HAMAP-Rule" id="MF_00086"/>
    </source>
</evidence>